<dbReference type="EMBL" id="X70828">
    <property type="protein sequence ID" value="CAA50167.1"/>
    <property type="molecule type" value="Genomic_DNA"/>
</dbReference>
<dbReference type="RefSeq" id="NP_040899.1">
    <property type="nucleotide sequence ID" value="NC_001458.1"/>
</dbReference>
<dbReference type="SMR" id="Q07850"/>
<dbReference type="KEGG" id="vg:1494571"/>
<dbReference type="OrthoDB" id="15886at10239"/>
<dbReference type="Proteomes" id="UP000007671">
    <property type="component" value="Segment"/>
</dbReference>
<dbReference type="GO" id="GO:0042025">
    <property type="term" value="C:host cell nucleus"/>
    <property type="evidence" value="ECO:0007669"/>
    <property type="project" value="UniProtKB-SubCell"/>
</dbReference>
<dbReference type="GO" id="GO:0003677">
    <property type="term" value="F:DNA binding"/>
    <property type="evidence" value="ECO:0007669"/>
    <property type="project" value="UniProtKB-UniRule"/>
</dbReference>
<dbReference type="GO" id="GO:0003700">
    <property type="term" value="F:DNA-binding transcription factor activity"/>
    <property type="evidence" value="ECO:0007669"/>
    <property type="project" value="UniProtKB-UniRule"/>
</dbReference>
<dbReference type="GO" id="GO:0000166">
    <property type="term" value="F:nucleotide binding"/>
    <property type="evidence" value="ECO:0007669"/>
    <property type="project" value="UniProtKB-UniRule"/>
</dbReference>
<dbReference type="GO" id="GO:0006260">
    <property type="term" value="P:DNA replication"/>
    <property type="evidence" value="ECO:0007669"/>
    <property type="project" value="UniProtKB-KW"/>
</dbReference>
<dbReference type="GO" id="GO:0006351">
    <property type="term" value="P:DNA-templated transcription"/>
    <property type="evidence" value="ECO:0007669"/>
    <property type="project" value="UniProtKB-UniRule"/>
</dbReference>
<dbReference type="GO" id="GO:0006275">
    <property type="term" value="P:regulation of DNA replication"/>
    <property type="evidence" value="ECO:0007669"/>
    <property type="project" value="UniProtKB-UniRule"/>
</dbReference>
<dbReference type="GO" id="GO:0039693">
    <property type="term" value="P:viral DNA genome replication"/>
    <property type="evidence" value="ECO:0007669"/>
    <property type="project" value="UniProtKB-UniRule"/>
</dbReference>
<dbReference type="Gene3D" id="3.30.70.330">
    <property type="match status" value="1"/>
</dbReference>
<dbReference type="Gene3D" id="1.10.287.30">
    <property type="entry name" value="E2 (early) protein, N terminal domain, subdomain 1"/>
    <property type="match status" value="1"/>
</dbReference>
<dbReference type="Gene3D" id="2.170.200.10">
    <property type="entry name" value="Papillomavirus E2 early protein domain"/>
    <property type="match status" value="1"/>
</dbReference>
<dbReference type="HAMAP" id="MF_04001">
    <property type="entry name" value="PPV_E2"/>
    <property type="match status" value="1"/>
</dbReference>
<dbReference type="InterPro" id="IPR035975">
    <property type="entry name" value="E2/EBNA1_C_sf"/>
</dbReference>
<dbReference type="InterPro" id="IPR012677">
    <property type="entry name" value="Nucleotide-bd_a/b_plait_sf"/>
</dbReference>
<dbReference type="InterPro" id="IPR000427">
    <property type="entry name" value="Papillomavirus_E2_C"/>
</dbReference>
<dbReference type="InterPro" id="IPR001866">
    <property type="entry name" value="PPV_E2_N"/>
</dbReference>
<dbReference type="InterPro" id="IPR033668">
    <property type="entry name" value="Reg_prot_E2"/>
</dbReference>
<dbReference type="InterPro" id="IPR036050">
    <property type="entry name" value="Regulatory_protein_E2_N"/>
</dbReference>
<dbReference type="InterPro" id="IPR042503">
    <property type="entry name" value="Regulatory_protein_E2_N_1"/>
</dbReference>
<dbReference type="InterPro" id="IPR042504">
    <property type="entry name" value="Regulatory_protein_E2_N_2"/>
</dbReference>
<dbReference type="Pfam" id="PF00511">
    <property type="entry name" value="PPV_E2_C"/>
    <property type="match status" value="1"/>
</dbReference>
<dbReference type="Pfam" id="PF00508">
    <property type="entry name" value="PPV_E2_N"/>
    <property type="match status" value="1"/>
</dbReference>
<dbReference type="SUPFAM" id="SSF51332">
    <property type="entry name" value="E2 regulatory, transactivation domain"/>
    <property type="match status" value="1"/>
</dbReference>
<dbReference type="SUPFAM" id="SSF54957">
    <property type="entry name" value="Viral DNA-binding domain"/>
    <property type="match status" value="1"/>
</dbReference>
<gene>
    <name evidence="1" type="primary">E2</name>
</gene>
<proteinExistence type="inferred from homology"/>
<comment type="function">
    <text evidence="1">Plays a role in the initiation of viral DNA replication. A dimer of E2 interacts with a dimer of E1 in order to improve specificity of E1 DNA binding activity. Once the complex recognizes and binds DNA at specific sites, the E2 dimer is removed from DNA. E2 also regulates viral transcription through binding to the E2RE response element (5'-ACCNNNNNNGGT-3') present in multiple copies in the regulatory regions of the viral genome. Activates or represses transcription depending on E2RE's position with regards to proximal promoter elements including the TATA-box. Repression occurs by sterically hindering the assembly of the transcription initiation complex.</text>
</comment>
<comment type="subunit">
    <text evidence="1">Binds DNA as homodimer. Interacts with protein E1; this interaction greatly increases E1 DNA-binding activity. Interacts with protein L1; this interaction enhances E2-dependent replication and transcription activation. Interacts with protein L2; this interaction inhibits E2 transcriptional activity but not DNA replication function E2. Interacts with protein E7; this interaction inhibits E7 oncogenic activity. Interacts with host TAF1; this interaction modulates E2-dependent transcriptional regulation. Interacts with host BRD4; this interaction mediates E2 transcriptional activation function. Additionally, the interaction with host BRD4 on mitotic chromosomes mediates tethering of the viral genome. Interacts with host TOPBP1; this interaction is required for optimal viral DNA replication.</text>
</comment>
<comment type="subcellular location">
    <subcellularLocation>
        <location evidence="1">Host nucleus</location>
    </subcellularLocation>
</comment>
<comment type="PTM">
    <text evidence="1">Phosphorylated.</text>
</comment>
<comment type="PTM">
    <text evidence="1">Sumoylation plays a regulatory role in E2 transcriptional activity.</text>
</comment>
<comment type="similarity">
    <text evidence="1">Belongs to the papillomaviridae E2 protein family.</text>
</comment>
<feature type="chain" id="PRO_0000133239" description="Regulatory protein E2">
    <location>
        <begin position="1"/>
        <end position="398"/>
    </location>
</feature>
<feature type="region of interest" description="Transactivation domain" evidence="1">
    <location>
        <begin position="1"/>
        <end position="205"/>
    </location>
</feature>
<feature type="region of interest" description="Disordered" evidence="2">
    <location>
        <begin position="197"/>
        <end position="304"/>
    </location>
</feature>
<feature type="region of interest" description="DNA-binding domain" evidence="1">
    <location>
        <begin position="314"/>
        <end position="398"/>
    </location>
</feature>
<feature type="compositionally biased region" description="Polar residues" evidence="2">
    <location>
        <begin position="197"/>
        <end position="228"/>
    </location>
</feature>
<feature type="compositionally biased region" description="Basic residues" evidence="2">
    <location>
        <begin position="236"/>
        <end position="257"/>
    </location>
</feature>
<feature type="compositionally biased region" description="Basic and acidic residues" evidence="2">
    <location>
        <begin position="258"/>
        <end position="271"/>
    </location>
</feature>
<feature type="cross-link" description="Glycyl lysine isopeptide (Lys-Gly) (interchain with G-Cter in SUMO)" evidence="1">
    <location>
        <position position="321"/>
    </location>
</feature>
<keyword id="KW-0010">Activator</keyword>
<keyword id="KW-0235">DNA replication</keyword>
<keyword id="KW-0238">DNA-binding</keyword>
<keyword id="KW-0244">Early protein</keyword>
<keyword id="KW-1048">Host nucleus</keyword>
<keyword id="KW-1017">Isopeptide bond</keyword>
<keyword id="KW-0597">Phosphoprotein</keyword>
<keyword id="KW-1185">Reference proteome</keyword>
<keyword id="KW-0678">Repressor</keyword>
<keyword id="KW-0804">Transcription</keyword>
<keyword id="KW-0805">Transcription regulation</keyword>
<keyword id="KW-0832">Ubl conjugation</keyword>
<reference key="1">
    <citation type="journal article" date="1993" name="Virology">
        <title>Two novel types of human papillomavirus, HPV 63 and HPV 65: comparisons of their clinical and histological features and DNA sequences to other HPV types.</title>
        <authorList>
            <person name="Egawa K."/>
            <person name="Delius H."/>
            <person name="Matsukura T."/>
            <person name="Kawashima M."/>
            <person name="de Villiers E.M."/>
        </authorList>
    </citation>
    <scope>NUCLEOTIDE SEQUENCE [GENOMIC DNA]</scope>
</reference>
<sequence>MESLNNRLDWLQEQLLTLYEKDSKDIEDQIMQWNLLRQEQVLFHYARKKGIMRLGLQVVPSLAASQDKAKTAIEMTLYLSGLRDSQYGSEQWSLQDTSREIFLAPPDHTFKKGGQTIEVIYDEDPNNSTRHTVWRHIYYQNGDNRWRKAASDVDVHGVFYLEYDGVKNYYVDFQEEANRYSKTGRYTVQYEGKRFTNVMSPVNSSPLRTSGSPTDTNPATQGQSTQTARKAETKGSRHHPKSPAVRKRRPYGRRRSRSPRDTTLRRGEGESARASAGSGERVAFISPGDVGTSTRSPPKGGQSRLRRLIQEARDPPIICLKGGPNQLKCLRYRIKASNSSDFESISTTWHWVHNKCTDRVGHARMLVRFISTEQRDRFLDKVVVPKSVSVILGAFDGS</sequence>
<evidence type="ECO:0000255" key="1">
    <source>
        <dbReference type="HAMAP-Rule" id="MF_04001"/>
    </source>
</evidence>
<evidence type="ECO:0000256" key="2">
    <source>
        <dbReference type="SAM" id="MobiDB-lite"/>
    </source>
</evidence>
<protein>
    <recommendedName>
        <fullName evidence="1">Regulatory protein E2</fullName>
    </recommendedName>
</protein>
<name>VE2_HPV63</name>
<organism>
    <name type="scientific">Human papillomavirus type 63</name>
    <dbReference type="NCBI Taxonomy" id="28311"/>
    <lineage>
        <taxon>Viruses</taxon>
        <taxon>Monodnaviria</taxon>
        <taxon>Shotokuvirae</taxon>
        <taxon>Cossaviricota</taxon>
        <taxon>Papovaviricetes</taxon>
        <taxon>Zurhausenvirales</taxon>
        <taxon>Papillomaviridae</taxon>
        <taxon>Firstpapillomavirinae</taxon>
        <taxon>Mupapillomavirus</taxon>
        <taxon>Mupapillomavirus 2</taxon>
    </lineage>
</organism>
<accession>Q07850</accession>
<organismHost>
    <name type="scientific">Homo sapiens</name>
    <name type="common">Human</name>
    <dbReference type="NCBI Taxonomy" id="9606"/>
</organismHost>